<sequence>MEDYKAFLDEKMSKVLLSLDNEYKTLRTGRISSNIFDKIFIQYHGQRTPITQVSSIRIPEARLVVIQPWDKTILNKIEQAILNSDLSMNPSSDGSVIRIKVPALTSERRQDIVKHAKKIAEEHKISTRNIRQDLNNKVKKQEKESEITEDSLKRILDDIQKSTDIYIKKIDAILESKIQEIMEV</sequence>
<accession>Q0SP43</accession>
<accession>G0IQW6</accession>
<feature type="chain" id="PRO_1000003111" description="Ribosome-recycling factor">
    <location>
        <begin position="1"/>
        <end position="184"/>
    </location>
</feature>
<reference key="1">
    <citation type="journal article" date="2006" name="BMC Genomics">
        <title>Comparative genome analysis: selection pressure on the Borrelia vls cassettes is essential for infectivity.</title>
        <authorList>
            <person name="Gloeckner G."/>
            <person name="Schulte-Spechtel U."/>
            <person name="Schilhabel M."/>
            <person name="Felder M."/>
            <person name="Suehnel J."/>
            <person name="Wilske B."/>
            <person name="Platzer M."/>
        </authorList>
    </citation>
    <scope>NUCLEOTIDE SEQUENCE [LARGE SCALE GENOMIC DNA]</scope>
    <source>
        <strain>PKo</strain>
    </source>
</reference>
<reference key="2">
    <citation type="journal article" date="2011" name="J. Bacteriol.">
        <title>Whole-genome sequences of two Borrelia afzelii and two Borrelia garinii Lyme disease agent isolates.</title>
        <authorList>
            <person name="Casjens S.R."/>
            <person name="Mongodin E.F."/>
            <person name="Qiu W.G."/>
            <person name="Dunn J.J."/>
            <person name="Luft B.J."/>
            <person name="Fraser-Liggett C.M."/>
            <person name="Schutzer S.E."/>
        </authorList>
    </citation>
    <scope>NUCLEOTIDE SEQUENCE [LARGE SCALE GENOMIC DNA]</scope>
    <source>
        <strain>PKo</strain>
    </source>
</reference>
<dbReference type="EMBL" id="CP000395">
    <property type="protein sequence ID" value="ABH01385.1"/>
    <property type="molecule type" value="Genomic_DNA"/>
</dbReference>
<dbReference type="EMBL" id="CP002933">
    <property type="protein sequence ID" value="AEL69352.1"/>
    <property type="molecule type" value="Genomic_DNA"/>
</dbReference>
<dbReference type="RefSeq" id="WP_011600840.1">
    <property type="nucleotide sequence ID" value="NZ_CP160066.1"/>
</dbReference>
<dbReference type="SMR" id="Q0SP43"/>
<dbReference type="STRING" id="29518.BLA32_03685"/>
<dbReference type="GeneID" id="77264963"/>
<dbReference type="KEGG" id="baf:BAPKO_0122"/>
<dbReference type="KEGG" id="bafz:BafPKo_0119"/>
<dbReference type="PATRIC" id="fig|390236.22.peg.118"/>
<dbReference type="eggNOG" id="COG0233">
    <property type="taxonomic scope" value="Bacteria"/>
</dbReference>
<dbReference type="HOGENOM" id="CLU_073981_2_0_12"/>
<dbReference type="OrthoDB" id="9804006at2"/>
<dbReference type="Proteomes" id="UP000005216">
    <property type="component" value="Chromosome"/>
</dbReference>
<dbReference type="GO" id="GO:0005737">
    <property type="term" value="C:cytoplasm"/>
    <property type="evidence" value="ECO:0007669"/>
    <property type="project" value="UniProtKB-SubCell"/>
</dbReference>
<dbReference type="GO" id="GO:0043023">
    <property type="term" value="F:ribosomal large subunit binding"/>
    <property type="evidence" value="ECO:0007669"/>
    <property type="project" value="TreeGrafter"/>
</dbReference>
<dbReference type="GO" id="GO:0006415">
    <property type="term" value="P:translational termination"/>
    <property type="evidence" value="ECO:0007669"/>
    <property type="project" value="UniProtKB-UniRule"/>
</dbReference>
<dbReference type="CDD" id="cd00520">
    <property type="entry name" value="RRF"/>
    <property type="match status" value="1"/>
</dbReference>
<dbReference type="FunFam" id="1.10.132.20:FF:000001">
    <property type="entry name" value="Ribosome-recycling factor"/>
    <property type="match status" value="1"/>
</dbReference>
<dbReference type="FunFam" id="3.30.1360.40:FF:000001">
    <property type="entry name" value="Ribosome-recycling factor"/>
    <property type="match status" value="1"/>
</dbReference>
<dbReference type="Gene3D" id="3.30.1360.40">
    <property type="match status" value="1"/>
</dbReference>
<dbReference type="Gene3D" id="1.10.132.20">
    <property type="entry name" value="Ribosome-recycling factor"/>
    <property type="match status" value="1"/>
</dbReference>
<dbReference type="HAMAP" id="MF_00040">
    <property type="entry name" value="RRF"/>
    <property type="match status" value="1"/>
</dbReference>
<dbReference type="InterPro" id="IPR002661">
    <property type="entry name" value="Ribosome_recyc_fac"/>
</dbReference>
<dbReference type="InterPro" id="IPR023584">
    <property type="entry name" value="Ribosome_recyc_fac_dom"/>
</dbReference>
<dbReference type="InterPro" id="IPR036191">
    <property type="entry name" value="RRF_sf"/>
</dbReference>
<dbReference type="NCBIfam" id="TIGR00496">
    <property type="entry name" value="frr"/>
    <property type="match status" value="1"/>
</dbReference>
<dbReference type="PANTHER" id="PTHR20982:SF3">
    <property type="entry name" value="MITOCHONDRIAL RIBOSOME RECYCLING FACTOR PSEUDO 1"/>
    <property type="match status" value="1"/>
</dbReference>
<dbReference type="PANTHER" id="PTHR20982">
    <property type="entry name" value="RIBOSOME RECYCLING FACTOR"/>
    <property type="match status" value="1"/>
</dbReference>
<dbReference type="Pfam" id="PF01765">
    <property type="entry name" value="RRF"/>
    <property type="match status" value="1"/>
</dbReference>
<dbReference type="SUPFAM" id="SSF55194">
    <property type="entry name" value="Ribosome recycling factor, RRF"/>
    <property type="match status" value="1"/>
</dbReference>
<protein>
    <recommendedName>
        <fullName evidence="1">Ribosome-recycling factor</fullName>
        <shortName evidence="1">RRF</shortName>
    </recommendedName>
    <alternativeName>
        <fullName evidence="1">Ribosome-releasing factor</fullName>
    </alternativeName>
</protein>
<gene>
    <name evidence="1" type="primary">frr</name>
    <name type="ordered locus">BAPKO_0122</name>
    <name type="ordered locus">BafPKo_0119</name>
</gene>
<comment type="function">
    <text evidence="1">Responsible for the release of ribosomes from messenger RNA at the termination of protein biosynthesis. May increase the efficiency of translation by recycling ribosomes from one round of translation to another.</text>
</comment>
<comment type="subcellular location">
    <subcellularLocation>
        <location evidence="1">Cytoplasm</location>
    </subcellularLocation>
</comment>
<comment type="similarity">
    <text evidence="1">Belongs to the RRF family.</text>
</comment>
<keyword id="KW-0963">Cytoplasm</keyword>
<keyword id="KW-0648">Protein biosynthesis</keyword>
<evidence type="ECO:0000255" key="1">
    <source>
        <dbReference type="HAMAP-Rule" id="MF_00040"/>
    </source>
</evidence>
<organism>
    <name type="scientific">Borreliella afzelii (strain PKo)</name>
    <name type="common">Borrelia afzelii</name>
    <dbReference type="NCBI Taxonomy" id="390236"/>
    <lineage>
        <taxon>Bacteria</taxon>
        <taxon>Pseudomonadati</taxon>
        <taxon>Spirochaetota</taxon>
        <taxon>Spirochaetia</taxon>
        <taxon>Spirochaetales</taxon>
        <taxon>Borreliaceae</taxon>
        <taxon>Borreliella</taxon>
    </lineage>
</organism>
<name>RRF_BORAP</name>
<proteinExistence type="inferred from homology"/>